<gene>
    <name type="primary">AHCTF1</name>
    <name type="synonym">ELYS</name>
    <name type="synonym">TMBS62</name>
    <name type="ORF">MSTP108</name>
</gene>
<feature type="chain" id="PRO_0000246319" description="Protein ELYS">
    <location>
        <begin position="1"/>
        <end position="2266"/>
    </location>
</feature>
<feature type="DNA-binding region" description="A.T hook" evidence="2">
    <location>
        <begin position="1971"/>
        <end position="1983"/>
    </location>
</feature>
<feature type="region of interest" description="Necessary for cytoplasmic localization" evidence="3">
    <location>
        <begin position="1"/>
        <end position="981"/>
    </location>
</feature>
<feature type="region of interest" description="Seven-bladed beta propeller repeats" evidence="3">
    <location>
        <begin position="1"/>
        <end position="494"/>
    </location>
</feature>
<feature type="region of interest" description="Important for nuclear localization" evidence="7">
    <location>
        <begin position="591"/>
        <end position="1092"/>
    </location>
</feature>
<feature type="region of interest" description="Disordered" evidence="3">
    <location>
        <begin position="1019"/>
        <end position="2266"/>
    </location>
</feature>
<feature type="region of interest" description="Necessary for nuclear localization" evidence="3">
    <location>
        <begin position="1149"/>
        <end position="2266"/>
    </location>
</feature>
<feature type="region of interest" description="Mediates transcriptional activity" evidence="3">
    <location>
        <begin position="1446"/>
        <end position="1698"/>
    </location>
</feature>
<feature type="region of interest" description="Important for nuclear localization and chromatin binding" evidence="7">
    <location>
        <begin position="1842"/>
        <end position="2266"/>
    </location>
</feature>
<feature type="compositionally biased region" description="Polar residues" evidence="4">
    <location>
        <begin position="1305"/>
        <end position="1320"/>
    </location>
</feature>
<feature type="compositionally biased region" description="Polar residues" evidence="4">
    <location>
        <begin position="1335"/>
        <end position="1353"/>
    </location>
</feature>
<feature type="compositionally biased region" description="Polar residues" evidence="4">
    <location>
        <begin position="1796"/>
        <end position="1808"/>
    </location>
</feature>
<feature type="compositionally biased region" description="Polar residues" evidence="4">
    <location>
        <begin position="1822"/>
        <end position="1838"/>
    </location>
</feature>
<feature type="compositionally biased region" description="Polar residues" evidence="4">
    <location>
        <begin position="1908"/>
        <end position="1919"/>
    </location>
</feature>
<feature type="compositionally biased region" description="Basic and acidic residues" evidence="4">
    <location>
        <begin position="1920"/>
        <end position="1930"/>
    </location>
</feature>
<feature type="compositionally biased region" description="Basic and acidic residues" evidence="4">
    <location>
        <begin position="1940"/>
        <end position="1952"/>
    </location>
</feature>
<feature type="compositionally biased region" description="Basic and acidic residues" evidence="4">
    <location>
        <begin position="1986"/>
        <end position="2004"/>
    </location>
</feature>
<feature type="compositionally biased region" description="Basic and acidic residues" evidence="4">
    <location>
        <begin position="2064"/>
        <end position="2084"/>
    </location>
</feature>
<feature type="compositionally biased region" description="Basic and acidic residues" evidence="4">
    <location>
        <begin position="2169"/>
        <end position="2179"/>
    </location>
</feature>
<feature type="compositionally biased region" description="Basic residues" evidence="4">
    <location>
        <begin position="2188"/>
        <end position="2197"/>
    </location>
</feature>
<feature type="modified residue" description="Phosphoserine" evidence="19">
    <location>
        <position position="509"/>
    </location>
</feature>
<feature type="modified residue" description="Phosphoserine" evidence="13 15 17 19">
    <location>
        <position position="528"/>
    </location>
</feature>
<feature type="modified residue" description="Phosphoserine" evidence="3">
    <location>
        <position position="1080"/>
    </location>
</feature>
<feature type="modified residue" description="Phosphoserine" evidence="3">
    <location>
        <position position="1138"/>
    </location>
</feature>
<feature type="modified residue" description="Phosphoserine" evidence="14 18">
    <location>
        <position position="1142"/>
    </location>
</feature>
<feature type="modified residue" description="Phosphoserine" evidence="14">
    <location>
        <position position="1150"/>
    </location>
</feature>
<feature type="modified residue" description="Phosphoserine" evidence="19">
    <location>
        <position position="1153"/>
    </location>
</feature>
<feature type="modified residue" description="Phosphoserine" evidence="14">
    <location>
        <position position="1155"/>
    </location>
</feature>
<feature type="modified residue" description="Phosphoserine" evidence="14 17 18 19">
    <location>
        <position position="1160"/>
    </location>
</feature>
<feature type="modified residue" description="Phosphothreonine" evidence="14">
    <location>
        <position position="1175"/>
    </location>
</feature>
<feature type="modified residue" description="Phosphoserine" evidence="18 19">
    <location>
        <position position="1214"/>
    </location>
</feature>
<feature type="modified residue" description="Phosphoserine" evidence="19">
    <location>
        <position position="1218"/>
    </location>
</feature>
<feature type="modified residue" description="Phosphoserine" evidence="13 19">
    <location>
        <position position="1222"/>
    </location>
</feature>
<feature type="modified residue" description="Phosphoserine" evidence="12 17 19">
    <location>
        <position position="1232"/>
    </location>
</feature>
<feature type="modified residue" description="Phosphoserine" evidence="14 19">
    <location>
        <position position="1250"/>
    </location>
</feature>
<feature type="modified residue" description="Phosphothreonine" evidence="19">
    <location>
        <position position="1257"/>
    </location>
</feature>
<feature type="modified residue" description="Phosphoserine" evidence="12 15 16 17 18 19">
    <location>
        <position position="1283"/>
    </location>
</feature>
<feature type="modified residue" description="Phosphoserine" evidence="17">
    <location>
        <position position="1297"/>
    </location>
</feature>
<feature type="modified residue" description="Phosphothreonine" evidence="17 19">
    <location>
        <position position="1369"/>
    </location>
</feature>
<feature type="modified residue" description="Phosphoserine" evidence="3">
    <location>
        <position position="1371"/>
    </location>
</feature>
<feature type="modified residue" description="Phosphoserine" evidence="17 19">
    <location>
        <position position="1513"/>
    </location>
</feature>
<feature type="modified residue" description="Phosphothreonine" evidence="18">
    <location>
        <position position="1517"/>
    </location>
</feature>
<feature type="modified residue" description="Phosphoserine" evidence="17 18">
    <location>
        <position position="1533"/>
    </location>
</feature>
<feature type="modified residue" description="Phosphoserine" evidence="14 15 16 17 18 19">
    <location>
        <position position="1541"/>
    </location>
</feature>
<feature type="modified residue" description="Phosphoserine" evidence="14">
    <location>
        <position position="1729"/>
    </location>
</feature>
<feature type="modified residue" description="Phosphoserine" evidence="14">
    <location>
        <position position="1806"/>
    </location>
</feature>
<feature type="modified residue" description="Phosphothreonine" evidence="14">
    <location>
        <position position="1808"/>
    </location>
</feature>
<feature type="modified residue" description="Phosphoserine" evidence="14 15 17">
    <location>
        <position position="1878"/>
    </location>
</feature>
<feature type="modified residue" description="Phosphoserine" evidence="14 16">
    <location>
        <position position="1884"/>
    </location>
</feature>
<feature type="modified residue" description="Phosphoserine" evidence="14 17">
    <location>
        <position position="1898"/>
    </location>
</feature>
<feature type="modified residue" description="Phosphoserine" evidence="17 18 19">
    <location>
        <position position="1944"/>
    </location>
</feature>
<feature type="modified residue" description="Phosphoserine" evidence="17">
    <location>
        <position position="1946"/>
    </location>
</feature>
<feature type="modified residue" description="Phosphoserine" evidence="12">
    <location>
        <position position="1996"/>
    </location>
</feature>
<feature type="modified residue" description="Phosphoserine" evidence="17">
    <location>
        <position position="2043"/>
    </location>
</feature>
<feature type="modified residue" description="Phosphoserine" evidence="17">
    <location>
        <position position="2044"/>
    </location>
</feature>
<feature type="modified residue" description="Phosphoserine" evidence="14">
    <location>
        <position position="2060"/>
    </location>
</feature>
<feature type="modified residue" description="Phosphoserine" evidence="14 19">
    <location>
        <position position="2089"/>
    </location>
</feature>
<feature type="modified residue" description="Phosphoserine" evidence="14 15 17">
    <location>
        <position position="2120"/>
    </location>
</feature>
<feature type="modified residue" description="Phosphoserine" evidence="14">
    <location>
        <position position="2123"/>
    </location>
</feature>
<feature type="modified residue" description="Phosphoserine" evidence="14 17">
    <location>
        <position position="2154"/>
    </location>
</feature>
<feature type="modified residue" description="Phosphoserine" evidence="14 17 19">
    <location>
        <position position="2212"/>
    </location>
</feature>
<feature type="modified residue" description="Phosphoserine" evidence="11 15 16 17 19">
    <location>
        <position position="2222"/>
    </location>
</feature>
<feature type="modified residue" description="Phosphoserine" evidence="11 15 17 19">
    <location>
        <position position="2226"/>
    </location>
</feature>
<feature type="splice variant" id="VSP_019844" description="In isoform 2." evidence="9">
    <original>M</original>
    <variation>MDSLAGLSPREAAGVLSLSCVGVCSTCAWAWPHGSM</variation>
    <location>
        <position position="1"/>
    </location>
</feature>
<feature type="splice variant" id="VSP_042691" description="In isoform 3." evidence="8">
    <original>M</original>
    <variation>MAAERRCGSM</variation>
    <location>
        <position position="1"/>
    </location>
</feature>
<feature type="sequence variant" id="VAR_027037" description="In dbSNP:rs2642990.">
    <original>N</original>
    <variation>S</variation>
    <location>
        <position position="874"/>
    </location>
</feature>
<feature type="sequence variant" id="VAR_027038" description="In dbSNP:rs12410563.">
    <original>L</original>
    <variation>V</variation>
    <location>
        <position position="2185"/>
    </location>
</feature>
<feature type="sequence conflict" description="In Ref. 1; BAB78516." evidence="10" ref="1">
    <original>V</original>
    <variation>I</variation>
    <location>
        <position position="168"/>
    </location>
</feature>
<feature type="sequence conflict" description="In Ref. 1; BAB78516." evidence="10" ref="1">
    <original>Q</original>
    <variation>E</variation>
    <location>
        <position position="207"/>
    </location>
</feature>
<feature type="sequence conflict" description="In Ref. 1; BAB78516." evidence="10" ref="1">
    <original>V</original>
    <variation>A</variation>
    <location>
        <position position="237"/>
    </location>
</feature>
<feature type="sequence conflict" description="In Ref. 1; BAB78516." evidence="10" ref="1">
    <original>P</original>
    <variation>R</variation>
    <location>
        <position position="279"/>
    </location>
</feature>
<feature type="sequence conflict" description="In Ref. 2; AAN65622." evidence="10" ref="2">
    <original>D</original>
    <variation>G</variation>
    <location>
        <position position="403"/>
    </location>
</feature>
<feature type="sequence conflict" description="In Ref. 1; BAB78516." evidence="10" ref="1">
    <original>T</original>
    <variation>A</variation>
    <location>
        <position position="646"/>
    </location>
</feature>
<feature type="sequence conflict" description="In Ref. 2; AAN65622." evidence="10" ref="2">
    <original>D</original>
    <variation>G</variation>
    <location>
        <position position="743"/>
    </location>
</feature>
<feature type="sequence conflict" description="In Ref. 2; AAN65622." evidence="10" ref="2">
    <original>A</original>
    <variation>G</variation>
    <location>
        <position position="753"/>
    </location>
</feature>
<feature type="sequence conflict" description="In Ref. 2; AAN65622." evidence="10" ref="2">
    <original>F</original>
    <variation>S</variation>
    <location>
        <position position="1134"/>
    </location>
</feature>
<feature type="sequence conflict" description="In Ref. 1; BAB78516." evidence="10" ref="1">
    <original>L</original>
    <variation>P</variation>
    <location>
        <position position="1207"/>
    </location>
</feature>
<feature type="sequence conflict" description="In Ref. 1; BAB78516." evidence="10" ref="1">
    <original>L</original>
    <variation>P</variation>
    <location>
        <position position="1270"/>
    </location>
</feature>
<feature type="sequence conflict" description="In Ref. 4; CAB45737." evidence="10" ref="4">
    <original>S</original>
    <variation>F</variation>
    <location>
        <position position="1737"/>
    </location>
</feature>
<feature type="sequence conflict" description="In Ref. 1; BAB78516." evidence="10" ref="1">
    <original>S</original>
    <variation>F</variation>
    <location>
        <position position="1797"/>
    </location>
</feature>
<feature type="sequence conflict" description="In Ref. 2; AAN65622." evidence="10" ref="2">
    <original>E</original>
    <variation>G</variation>
    <location>
        <position position="1830"/>
    </location>
</feature>
<feature type="sequence conflict" description="In Ref. 2; AAN65622." evidence="10" ref="2">
    <original>K</original>
    <variation>E</variation>
    <location>
        <position position="2128"/>
    </location>
</feature>
<feature type="sequence conflict" description="In Ref. 6; AAH12307." evidence="10" ref="6">
    <original>K</original>
    <variation>E</variation>
    <location>
        <position position="2187"/>
    </location>
</feature>
<feature type="sequence conflict" description="In Ref. 1; BAB78516." evidence="10" ref="1">
    <original>P</original>
    <variation>L</variation>
    <location>
        <position position="2213"/>
    </location>
</feature>
<accession>Q8WYP5</accession>
<accession>A6NGM0</accession>
<accession>A8MSG9</accession>
<accession>A8MZ86</accession>
<accession>Q7Z4E3</accession>
<accession>Q8IZA4</accession>
<accession>Q96EH9</accession>
<accession>Q9Y4Q6</accession>
<name>ELYS_HUMAN</name>
<dbReference type="EMBL" id="AB059277">
    <property type="protein sequence ID" value="BAB78516.1"/>
    <property type="status" value="ALT_INIT"/>
    <property type="molecule type" value="mRNA"/>
</dbReference>
<dbReference type="EMBL" id="AY157619">
    <property type="protein sequence ID" value="AAN65622.1"/>
    <property type="status" value="ALT_FRAME"/>
    <property type="molecule type" value="mRNA"/>
</dbReference>
<dbReference type="EMBL" id="AC113174">
    <property type="status" value="NOT_ANNOTATED_CDS"/>
    <property type="molecule type" value="Genomic_DNA"/>
</dbReference>
<dbReference type="EMBL" id="AL080144">
    <property type="protein sequence ID" value="CAB45737.1"/>
    <property type="molecule type" value="mRNA"/>
</dbReference>
<dbReference type="EMBL" id="AF173978">
    <property type="protein sequence ID" value="AAQ13621.1"/>
    <property type="status" value="ALT_INIT"/>
    <property type="molecule type" value="mRNA"/>
</dbReference>
<dbReference type="EMBL" id="BC012307">
    <property type="protein sequence ID" value="AAH12307.1"/>
    <property type="molecule type" value="mRNA"/>
</dbReference>
<dbReference type="CCDS" id="CCDS1629.2">
    <molecule id="Q8WYP5-3"/>
</dbReference>
<dbReference type="CCDS" id="CCDS91190.1">
    <molecule id="Q8WYP5-1"/>
</dbReference>
<dbReference type="CCDS" id="CCDS91191.1">
    <molecule id="Q8WYP5-2"/>
</dbReference>
<dbReference type="PIR" id="T12528">
    <property type="entry name" value="T12528"/>
</dbReference>
<dbReference type="RefSeq" id="NP_001310271.1">
    <molecule id="Q8WYP5-1"/>
    <property type="nucleotide sequence ID" value="NM_001323342.2"/>
</dbReference>
<dbReference type="RefSeq" id="NP_001397879.1">
    <molecule id="Q8WYP5-2"/>
    <property type="nucleotide sequence ID" value="NM_001410950.1"/>
</dbReference>
<dbReference type="RefSeq" id="NP_056261.4">
    <molecule id="Q8WYP5-3"/>
    <property type="nucleotide sequence ID" value="NM_015446.5"/>
</dbReference>
<dbReference type="RefSeq" id="XP_006711821.1">
    <property type="nucleotide sequence ID" value="XM_006711758.1"/>
</dbReference>
<dbReference type="PDB" id="7R5J">
    <property type="method" value="EM"/>
    <property type="resolution" value="50.00 A"/>
    <property type="chains" value="T0/T1=1-2266"/>
</dbReference>
<dbReference type="PDB" id="7R5K">
    <property type="method" value="EM"/>
    <property type="resolution" value="12.00 A"/>
    <property type="chains" value="T0/T1=1-2266"/>
</dbReference>
<dbReference type="PDBsum" id="7R5J"/>
<dbReference type="PDBsum" id="7R5K"/>
<dbReference type="EMDB" id="EMD-14321"/>
<dbReference type="EMDB" id="EMD-14322"/>
<dbReference type="SMR" id="Q8WYP5"/>
<dbReference type="BioGRID" id="117414">
    <property type="interactions" value="179"/>
</dbReference>
<dbReference type="ComplexPortal" id="CPX-873">
    <property type="entry name" value="Nuclear pore complex"/>
</dbReference>
<dbReference type="CORUM" id="Q8WYP5"/>
<dbReference type="FunCoup" id="Q8WYP5">
    <property type="interactions" value="3970"/>
</dbReference>
<dbReference type="IntAct" id="Q8WYP5">
    <property type="interactions" value="112"/>
</dbReference>
<dbReference type="MINT" id="Q8WYP5"/>
<dbReference type="STRING" id="9606.ENSP00000355465"/>
<dbReference type="TCDB" id="1.I.1.1.3">
    <property type="family name" value="the nuclear pore complex (npc) family"/>
</dbReference>
<dbReference type="GlyGen" id="Q8WYP5">
    <property type="glycosylation" value="12 sites, 1 N-linked glycan (1 site), 1 O-linked glycan (10 sites)"/>
</dbReference>
<dbReference type="iPTMnet" id="Q8WYP5"/>
<dbReference type="PhosphoSitePlus" id="Q8WYP5"/>
<dbReference type="SwissPalm" id="Q8WYP5"/>
<dbReference type="BioMuta" id="AHCTF1"/>
<dbReference type="DMDM" id="259016354"/>
<dbReference type="jPOST" id="Q8WYP5"/>
<dbReference type="MassIVE" id="Q8WYP5"/>
<dbReference type="PaxDb" id="9606-ENSP00000355465"/>
<dbReference type="PeptideAtlas" id="Q8WYP5"/>
<dbReference type="ProteomicsDB" id="75181">
    <molecule id="Q8WYP5-1"/>
</dbReference>
<dbReference type="ProteomicsDB" id="75182">
    <molecule id="Q8WYP5-2"/>
</dbReference>
<dbReference type="ProteomicsDB" id="75183">
    <molecule id="Q8WYP5-3"/>
</dbReference>
<dbReference type="Pumba" id="Q8WYP5"/>
<dbReference type="Antibodypedia" id="20836">
    <property type="antibodies" value="108 antibodies from 17 providers"/>
</dbReference>
<dbReference type="DNASU" id="25909"/>
<dbReference type="Ensembl" id="ENST00000326225.3">
    <molecule id="Q8WYP5-3"/>
    <property type="protein sequence ID" value="ENSP00000355465.1"/>
    <property type="gene ID" value="ENSG00000153207.16"/>
</dbReference>
<dbReference type="Ensembl" id="ENST00000366508.5">
    <molecule id="Q8WYP5-2"/>
    <property type="protein sequence ID" value="ENSP00000355464.1"/>
    <property type="gene ID" value="ENSG00000153207.16"/>
</dbReference>
<dbReference type="Ensembl" id="ENST00000648844.2">
    <molecule id="Q8WYP5-1"/>
    <property type="protein sequence ID" value="ENSP00000497061.2"/>
    <property type="gene ID" value="ENSG00000153207.16"/>
</dbReference>
<dbReference type="GeneID" id="25909"/>
<dbReference type="KEGG" id="hsa:25909"/>
<dbReference type="MANE-Select" id="ENST00000648844.2">
    <property type="protein sequence ID" value="ENSP00000497061.2"/>
    <property type="RefSeq nucleotide sequence ID" value="NM_001323342.2"/>
    <property type="RefSeq protein sequence ID" value="NP_001310271.1"/>
</dbReference>
<dbReference type="UCSC" id="uc001ibv.3">
    <molecule id="Q8WYP5-1"/>
    <property type="organism name" value="human"/>
</dbReference>
<dbReference type="AGR" id="HGNC:24618"/>
<dbReference type="CTD" id="25909"/>
<dbReference type="DisGeNET" id="25909"/>
<dbReference type="GeneCards" id="AHCTF1"/>
<dbReference type="HGNC" id="HGNC:24618">
    <property type="gene designation" value="AHCTF1"/>
</dbReference>
<dbReference type="HPA" id="ENSG00000153207">
    <property type="expression patterns" value="Low tissue specificity"/>
</dbReference>
<dbReference type="MIM" id="610853">
    <property type="type" value="gene"/>
</dbReference>
<dbReference type="neXtProt" id="NX_Q8WYP5"/>
<dbReference type="OpenTargets" id="ENSG00000153207"/>
<dbReference type="PharmGKB" id="PA142672631"/>
<dbReference type="VEuPathDB" id="HostDB:ENSG00000153207"/>
<dbReference type="eggNOG" id="ENOG502QU0D">
    <property type="taxonomic scope" value="Eukaryota"/>
</dbReference>
<dbReference type="GeneTree" id="ENSGT00390000018900"/>
<dbReference type="HOGENOM" id="CLU_001145_0_0_1"/>
<dbReference type="InParanoid" id="Q8WYP5"/>
<dbReference type="OMA" id="KWNHDCL"/>
<dbReference type="OrthoDB" id="20729at2759"/>
<dbReference type="PAN-GO" id="Q8WYP5">
    <property type="GO annotations" value="0 GO annotations based on evolutionary models"/>
</dbReference>
<dbReference type="PhylomeDB" id="Q8WYP5"/>
<dbReference type="TreeFam" id="TF350425"/>
<dbReference type="PathwayCommons" id="Q8WYP5"/>
<dbReference type="Reactome" id="R-HSA-141444">
    <property type="pathway name" value="Amplification of signal from unattached kinetochores via a MAD2 inhibitory signal"/>
</dbReference>
<dbReference type="Reactome" id="R-HSA-2467813">
    <property type="pathway name" value="Separation of Sister Chromatids"/>
</dbReference>
<dbReference type="Reactome" id="R-HSA-2500257">
    <property type="pathway name" value="Resolution of Sister Chromatid Cohesion"/>
</dbReference>
<dbReference type="Reactome" id="R-HSA-5663220">
    <property type="pathway name" value="RHO GTPases Activate Formins"/>
</dbReference>
<dbReference type="Reactome" id="R-HSA-68877">
    <property type="pathway name" value="Mitotic Prometaphase"/>
</dbReference>
<dbReference type="Reactome" id="R-HSA-9615933">
    <property type="pathway name" value="Postmitotic nuclear pore complex (NPC) reformation"/>
</dbReference>
<dbReference type="Reactome" id="R-HSA-9648025">
    <property type="pathway name" value="EML4 and NUDC in mitotic spindle formation"/>
</dbReference>
<dbReference type="SignaLink" id="Q8WYP5"/>
<dbReference type="SIGNOR" id="Q8WYP5"/>
<dbReference type="BioGRID-ORCS" id="25909">
    <property type="hits" value="728 hits in 1162 CRISPR screens"/>
</dbReference>
<dbReference type="CD-CODE" id="91857CE7">
    <property type="entry name" value="Nucleolus"/>
</dbReference>
<dbReference type="CD-CODE" id="D6A53B8E">
    <property type="entry name" value="Nuclear pore complex"/>
</dbReference>
<dbReference type="ChiTaRS" id="AHCTF1">
    <property type="organism name" value="human"/>
</dbReference>
<dbReference type="GeneWiki" id="AHCTF1"/>
<dbReference type="GenomeRNAi" id="25909"/>
<dbReference type="Pharos" id="Q8WYP5">
    <property type="development level" value="Tbio"/>
</dbReference>
<dbReference type="PRO" id="PR:Q8WYP5"/>
<dbReference type="Proteomes" id="UP000005640">
    <property type="component" value="Chromosome 1"/>
</dbReference>
<dbReference type="RNAct" id="Q8WYP5">
    <property type="molecule type" value="protein"/>
</dbReference>
<dbReference type="Bgee" id="ENSG00000153207">
    <property type="expression patterns" value="Expressed in endothelial cell and 202 other cell types or tissues"/>
</dbReference>
<dbReference type="ExpressionAtlas" id="Q8WYP5">
    <property type="expression patterns" value="baseline and differential"/>
</dbReference>
<dbReference type="GO" id="GO:0000785">
    <property type="term" value="C:chromatin"/>
    <property type="evidence" value="ECO:0000314"/>
    <property type="project" value="UniProtKB"/>
</dbReference>
<dbReference type="GO" id="GO:0005829">
    <property type="term" value="C:cytosol"/>
    <property type="evidence" value="ECO:0000304"/>
    <property type="project" value="Reactome"/>
</dbReference>
<dbReference type="GO" id="GO:0070062">
    <property type="term" value="C:extracellular exosome"/>
    <property type="evidence" value="ECO:0007005"/>
    <property type="project" value="UniProtKB"/>
</dbReference>
<dbReference type="GO" id="GO:0000776">
    <property type="term" value="C:kinetochore"/>
    <property type="evidence" value="ECO:0007669"/>
    <property type="project" value="UniProtKB-KW"/>
</dbReference>
<dbReference type="GO" id="GO:0016604">
    <property type="term" value="C:nuclear body"/>
    <property type="evidence" value="ECO:0000314"/>
    <property type="project" value="HPA"/>
</dbReference>
<dbReference type="GO" id="GO:0005635">
    <property type="term" value="C:nuclear envelope"/>
    <property type="evidence" value="ECO:0000314"/>
    <property type="project" value="ComplexPortal"/>
</dbReference>
<dbReference type="GO" id="GO:0016363">
    <property type="term" value="C:nuclear matrix"/>
    <property type="evidence" value="ECO:0007669"/>
    <property type="project" value="UniProtKB-SubCell"/>
</dbReference>
<dbReference type="GO" id="GO:0031965">
    <property type="term" value="C:nuclear membrane"/>
    <property type="evidence" value="ECO:0000314"/>
    <property type="project" value="HPA"/>
</dbReference>
<dbReference type="GO" id="GO:0005643">
    <property type="term" value="C:nuclear pore"/>
    <property type="evidence" value="ECO:0000303"/>
    <property type="project" value="ComplexPortal"/>
</dbReference>
<dbReference type="GO" id="GO:0005654">
    <property type="term" value="C:nucleoplasm"/>
    <property type="evidence" value="ECO:0000314"/>
    <property type="project" value="HPA"/>
</dbReference>
<dbReference type="GO" id="GO:0005634">
    <property type="term" value="C:nucleus"/>
    <property type="evidence" value="ECO:0000314"/>
    <property type="project" value="UniProtKB"/>
</dbReference>
<dbReference type="GO" id="GO:0003677">
    <property type="term" value="F:DNA binding"/>
    <property type="evidence" value="ECO:0007669"/>
    <property type="project" value="UniProtKB-KW"/>
</dbReference>
<dbReference type="GO" id="GO:0051301">
    <property type="term" value="P:cell division"/>
    <property type="evidence" value="ECO:0007669"/>
    <property type="project" value="UniProtKB-KW"/>
</dbReference>
<dbReference type="GO" id="GO:0051028">
    <property type="term" value="P:mRNA transport"/>
    <property type="evidence" value="ECO:0007669"/>
    <property type="project" value="UniProtKB-KW"/>
</dbReference>
<dbReference type="GO" id="GO:0051292">
    <property type="term" value="P:nuclear pore complex assembly"/>
    <property type="evidence" value="ECO:0000315"/>
    <property type="project" value="UniProtKB"/>
</dbReference>
<dbReference type="GO" id="GO:0006913">
    <property type="term" value="P:nucleocytoplasmic transport"/>
    <property type="evidence" value="ECO:0000303"/>
    <property type="project" value="ComplexPortal"/>
</dbReference>
<dbReference type="GO" id="GO:0015031">
    <property type="term" value="P:protein transport"/>
    <property type="evidence" value="ECO:0007669"/>
    <property type="project" value="UniProtKB-KW"/>
</dbReference>
<dbReference type="GO" id="GO:0032465">
    <property type="term" value="P:regulation of cytokinesis"/>
    <property type="evidence" value="ECO:0000315"/>
    <property type="project" value="UniProtKB"/>
</dbReference>
<dbReference type="DisProt" id="DP01549"/>
<dbReference type="InterPro" id="IPR032040">
    <property type="entry name" value="ELYS-bb"/>
</dbReference>
<dbReference type="InterPro" id="IPR052620">
    <property type="entry name" value="ELYS/MEL-28_NucAsmblyFactor"/>
</dbReference>
<dbReference type="InterPro" id="IPR025151">
    <property type="entry name" value="ELYS_dom"/>
</dbReference>
<dbReference type="InterPro" id="IPR011047">
    <property type="entry name" value="Quinoprotein_ADH-like_sf"/>
</dbReference>
<dbReference type="PANTHER" id="PTHR21583">
    <property type="entry name" value="ELYS PROTEIN"/>
    <property type="match status" value="1"/>
</dbReference>
<dbReference type="PANTHER" id="PTHR21583:SF8">
    <property type="entry name" value="PROTEIN ELYS"/>
    <property type="match status" value="1"/>
</dbReference>
<dbReference type="Pfam" id="PF13934">
    <property type="entry name" value="ELYS"/>
    <property type="match status" value="1"/>
</dbReference>
<dbReference type="Pfam" id="PF16687">
    <property type="entry name" value="ELYS-bb"/>
    <property type="match status" value="1"/>
</dbReference>
<dbReference type="SUPFAM" id="SSF50998">
    <property type="entry name" value="Quinoprotein alcohol dehydrogenase-like"/>
    <property type="match status" value="1"/>
</dbReference>
<reference key="1">
    <citation type="journal article" date="2002" name="Genes Cells">
        <title>Identification of a novel transcription factor, ELYS, expressed predominantly in mouse foetal haematopoietic tissues.</title>
        <authorList>
            <person name="Kimura N."/>
            <person name="Takizawa M."/>
            <person name="Okita K."/>
            <person name="Natori O."/>
            <person name="Igarashi K."/>
            <person name="Ueno M."/>
            <person name="Nakashima K."/>
            <person name="Nobuhisa I."/>
            <person name="Taga T."/>
        </authorList>
    </citation>
    <scope>NUCLEOTIDE SEQUENCE [MRNA] (ISOFORM 3)</scope>
    <source>
        <tissue>Fetal liver</tissue>
    </source>
</reference>
<reference key="2">
    <citation type="submission" date="2002-10" db="EMBL/GenBank/DDBJ databases">
        <title>Cloning of a cDNA that provides partial correction of mitomycin C sensitivity in Fanconi anemia FA-D1 cells.</title>
        <authorList>
            <person name="Lightfoot J."/>
            <person name="Alon N."/>
            <person name="Buchwald M."/>
        </authorList>
    </citation>
    <scope>NUCLEOTIDE SEQUENCE [MRNA] (ISOFORM 2)</scope>
    <source>
        <tissue>Lymphoblast</tissue>
    </source>
</reference>
<reference key="3">
    <citation type="journal article" date="2006" name="Nature">
        <title>The DNA sequence and biological annotation of human chromosome 1.</title>
        <authorList>
            <person name="Gregory S.G."/>
            <person name="Barlow K.F."/>
            <person name="McLay K.E."/>
            <person name="Kaul R."/>
            <person name="Swarbreck D."/>
            <person name="Dunham A."/>
            <person name="Scott C.E."/>
            <person name="Howe K.L."/>
            <person name="Woodfine K."/>
            <person name="Spencer C.C.A."/>
            <person name="Jones M.C."/>
            <person name="Gillson C."/>
            <person name="Searle S."/>
            <person name="Zhou Y."/>
            <person name="Kokocinski F."/>
            <person name="McDonald L."/>
            <person name="Evans R."/>
            <person name="Phillips K."/>
            <person name="Atkinson A."/>
            <person name="Cooper R."/>
            <person name="Jones C."/>
            <person name="Hall R.E."/>
            <person name="Andrews T.D."/>
            <person name="Lloyd C."/>
            <person name="Ainscough R."/>
            <person name="Almeida J.P."/>
            <person name="Ambrose K.D."/>
            <person name="Anderson F."/>
            <person name="Andrew R.W."/>
            <person name="Ashwell R.I.S."/>
            <person name="Aubin K."/>
            <person name="Babbage A.K."/>
            <person name="Bagguley C.L."/>
            <person name="Bailey J."/>
            <person name="Beasley H."/>
            <person name="Bethel G."/>
            <person name="Bird C.P."/>
            <person name="Bray-Allen S."/>
            <person name="Brown J.Y."/>
            <person name="Brown A.J."/>
            <person name="Buckley D."/>
            <person name="Burton J."/>
            <person name="Bye J."/>
            <person name="Carder C."/>
            <person name="Chapman J.C."/>
            <person name="Clark S.Y."/>
            <person name="Clarke G."/>
            <person name="Clee C."/>
            <person name="Cobley V."/>
            <person name="Collier R.E."/>
            <person name="Corby N."/>
            <person name="Coville G.J."/>
            <person name="Davies J."/>
            <person name="Deadman R."/>
            <person name="Dunn M."/>
            <person name="Earthrowl M."/>
            <person name="Ellington A.G."/>
            <person name="Errington H."/>
            <person name="Frankish A."/>
            <person name="Frankland J."/>
            <person name="French L."/>
            <person name="Garner P."/>
            <person name="Garnett J."/>
            <person name="Gay L."/>
            <person name="Ghori M.R.J."/>
            <person name="Gibson R."/>
            <person name="Gilby L.M."/>
            <person name="Gillett W."/>
            <person name="Glithero R.J."/>
            <person name="Grafham D.V."/>
            <person name="Griffiths C."/>
            <person name="Griffiths-Jones S."/>
            <person name="Grocock R."/>
            <person name="Hammond S."/>
            <person name="Harrison E.S.I."/>
            <person name="Hart E."/>
            <person name="Haugen E."/>
            <person name="Heath P.D."/>
            <person name="Holmes S."/>
            <person name="Holt K."/>
            <person name="Howden P.J."/>
            <person name="Hunt A.R."/>
            <person name="Hunt S.E."/>
            <person name="Hunter G."/>
            <person name="Isherwood J."/>
            <person name="James R."/>
            <person name="Johnson C."/>
            <person name="Johnson D."/>
            <person name="Joy A."/>
            <person name="Kay M."/>
            <person name="Kershaw J.K."/>
            <person name="Kibukawa M."/>
            <person name="Kimberley A.M."/>
            <person name="King A."/>
            <person name="Knights A.J."/>
            <person name="Lad H."/>
            <person name="Laird G."/>
            <person name="Lawlor S."/>
            <person name="Leongamornlert D.A."/>
            <person name="Lloyd D.M."/>
            <person name="Loveland J."/>
            <person name="Lovell J."/>
            <person name="Lush M.J."/>
            <person name="Lyne R."/>
            <person name="Martin S."/>
            <person name="Mashreghi-Mohammadi M."/>
            <person name="Matthews L."/>
            <person name="Matthews N.S.W."/>
            <person name="McLaren S."/>
            <person name="Milne S."/>
            <person name="Mistry S."/>
            <person name="Moore M.J.F."/>
            <person name="Nickerson T."/>
            <person name="O'Dell C.N."/>
            <person name="Oliver K."/>
            <person name="Palmeiri A."/>
            <person name="Palmer S.A."/>
            <person name="Parker A."/>
            <person name="Patel D."/>
            <person name="Pearce A.V."/>
            <person name="Peck A.I."/>
            <person name="Pelan S."/>
            <person name="Phelps K."/>
            <person name="Phillimore B.J."/>
            <person name="Plumb R."/>
            <person name="Rajan J."/>
            <person name="Raymond C."/>
            <person name="Rouse G."/>
            <person name="Saenphimmachak C."/>
            <person name="Sehra H.K."/>
            <person name="Sheridan E."/>
            <person name="Shownkeen R."/>
            <person name="Sims S."/>
            <person name="Skuce C.D."/>
            <person name="Smith M."/>
            <person name="Steward C."/>
            <person name="Subramanian S."/>
            <person name="Sycamore N."/>
            <person name="Tracey A."/>
            <person name="Tromans A."/>
            <person name="Van Helmond Z."/>
            <person name="Wall M."/>
            <person name="Wallis J.M."/>
            <person name="White S."/>
            <person name="Whitehead S.L."/>
            <person name="Wilkinson J.E."/>
            <person name="Willey D.L."/>
            <person name="Williams H."/>
            <person name="Wilming L."/>
            <person name="Wray P.W."/>
            <person name="Wu Z."/>
            <person name="Coulson A."/>
            <person name="Vaudin M."/>
            <person name="Sulston J.E."/>
            <person name="Durbin R.M."/>
            <person name="Hubbard T."/>
            <person name="Wooster R."/>
            <person name="Dunham I."/>
            <person name="Carter N.P."/>
            <person name="McVean G."/>
            <person name="Ross M.T."/>
            <person name="Harrow J."/>
            <person name="Olson M.V."/>
            <person name="Beck S."/>
            <person name="Rogers J."/>
            <person name="Bentley D.R."/>
        </authorList>
    </citation>
    <scope>NUCLEOTIDE SEQUENCE [LARGE SCALE GENOMIC DNA]</scope>
</reference>
<reference key="4">
    <citation type="journal article" date="2007" name="BMC Genomics">
        <title>The full-ORF clone resource of the German cDNA consortium.</title>
        <authorList>
            <person name="Bechtel S."/>
            <person name="Rosenfelder H."/>
            <person name="Duda A."/>
            <person name="Schmidt C.P."/>
            <person name="Ernst U."/>
            <person name="Wellenreuther R."/>
            <person name="Mehrle A."/>
            <person name="Schuster C."/>
            <person name="Bahr A."/>
            <person name="Bloecker H."/>
            <person name="Heubner D."/>
            <person name="Hoerlein A."/>
            <person name="Michel G."/>
            <person name="Wedler H."/>
            <person name="Koehrer K."/>
            <person name="Ottenwaelder B."/>
            <person name="Poustka A."/>
            <person name="Wiemann S."/>
            <person name="Schupp I."/>
        </authorList>
    </citation>
    <scope>NUCLEOTIDE SEQUENCE [LARGE SCALE MRNA] OF 1522-2266 (ISOFORMS 1/2/3)</scope>
    <source>
        <tissue>Testis</tissue>
    </source>
</reference>
<reference key="5">
    <citation type="submission" date="1999-07" db="EMBL/GenBank/DDBJ databases">
        <authorList>
            <person name="Liu B."/>
            <person name="Zhao B."/>
            <person name="Wang X.Y."/>
            <person name="Liu Y.Q."/>
            <person name="Sheng H."/>
            <person name="Qin B.M."/>
            <person name="Zhang Q."/>
            <person name="Zheng W.Y."/>
            <person name="Xu H.S."/>
            <person name="Liu B.H."/>
            <person name="Lu H."/>
            <person name="Gong Q."/>
            <person name="Hui R.T."/>
        </authorList>
    </citation>
    <scope>NUCLEOTIDE SEQUENCE [LARGE SCALE MRNA] OF 1753-2266 (ISOFORMS 1/2/3)</scope>
    <source>
        <tissue>Heart</tissue>
    </source>
</reference>
<reference key="6">
    <citation type="journal article" date="2004" name="Genome Res.">
        <title>The status, quality, and expansion of the NIH full-length cDNA project: the Mammalian Gene Collection (MGC).</title>
        <authorList>
            <consortium name="The MGC Project Team"/>
        </authorList>
    </citation>
    <scope>NUCLEOTIDE SEQUENCE [LARGE SCALE MRNA] OF 2037-2266 (ISOFORMS 1/2/3)</scope>
    <source>
        <tissue>Retinoblastoma</tissue>
    </source>
</reference>
<reference key="7">
    <citation type="journal article" date="2006" name="Cell">
        <title>Global, in vivo, and site-specific phosphorylation dynamics in signaling networks.</title>
        <authorList>
            <person name="Olsen J.V."/>
            <person name="Blagoev B."/>
            <person name="Gnad F."/>
            <person name="Macek B."/>
            <person name="Kumar C."/>
            <person name="Mortensen P."/>
            <person name="Mann M."/>
        </authorList>
    </citation>
    <scope>PHOSPHORYLATION [LARGE SCALE ANALYSIS] AT SER-1232; SER-1283 AND SER-1996</scope>
    <scope>IDENTIFICATION BY MASS SPECTROMETRY [LARGE SCALE ANALYSIS]</scope>
    <source>
        <tissue>Cervix carcinoma</tissue>
    </source>
</reference>
<reference key="8">
    <citation type="journal article" date="2006" name="Nat. Biotechnol.">
        <title>A probability-based approach for high-throughput protein phosphorylation analysis and site localization.</title>
        <authorList>
            <person name="Beausoleil S.A."/>
            <person name="Villen J."/>
            <person name="Gerber S.A."/>
            <person name="Rush J."/>
            <person name="Gygi S.P."/>
        </authorList>
    </citation>
    <scope>PHOSPHORYLATION [LARGE SCALE ANALYSIS] AT SER-2222 AND SER-2226</scope>
    <scope>IDENTIFICATION BY MASS SPECTROMETRY [LARGE SCALE ANALYSIS]</scope>
    <source>
        <tissue>Cervix carcinoma</tissue>
    </source>
</reference>
<reference key="9">
    <citation type="journal article" date="2006" name="Proc. Natl. Acad. Sci. U.S.A.">
        <title>ELYS is a dual nucleoporin/kinetochore protein required for nuclear pore assembly and proper cell division.</title>
        <authorList>
            <person name="Rasala B.A."/>
            <person name="Orjalo A.V."/>
            <person name="Shen Z."/>
            <person name="Briggs S."/>
            <person name="Forbes D.J."/>
        </authorList>
    </citation>
    <scope>FUNCTION</scope>
    <scope>ASSOCIATION WITH THE NUP107-160 COMPLEX</scope>
    <scope>SUBCELLULAR LOCATION</scope>
</reference>
<reference key="10">
    <citation type="journal article" date="2007" name="EMBO Rep.">
        <title>MEL-28/ELYS is required for the recruitment of nucleoporins to chromatin and postmitotic nuclear pore complex assembly.</title>
        <authorList>
            <person name="Franz C."/>
            <person name="Walczak R."/>
            <person name="Yavuz S."/>
            <person name="Santarella R."/>
            <person name="Gentzel M."/>
            <person name="Askjaer P."/>
            <person name="Galy V."/>
            <person name="Hetzer M."/>
            <person name="Mattaj I.W."/>
            <person name="Antonin W."/>
        </authorList>
    </citation>
    <scope>FUNCTION</scope>
    <scope>SUBCELLULAR LOCATION</scope>
</reference>
<reference key="11">
    <citation type="journal article" date="2008" name="J. Proteome Res.">
        <title>Combining protein-based IMAC, peptide-based IMAC, and MudPIT for efficient phosphoproteomic analysis.</title>
        <authorList>
            <person name="Cantin G.T."/>
            <person name="Yi W."/>
            <person name="Lu B."/>
            <person name="Park S.K."/>
            <person name="Xu T."/>
            <person name="Lee J.-D."/>
            <person name="Yates J.R. III"/>
        </authorList>
    </citation>
    <scope>PHOSPHORYLATION [LARGE SCALE ANALYSIS] AT SER-528 AND SER-1222</scope>
    <scope>IDENTIFICATION BY MASS SPECTROMETRY [LARGE SCALE ANALYSIS]</scope>
    <source>
        <tissue>Cervix carcinoma</tissue>
    </source>
</reference>
<reference key="12">
    <citation type="journal article" date="2008" name="Mol. Cell">
        <title>Kinase-selective enrichment enables quantitative phosphoproteomics of the kinome across the cell cycle.</title>
        <authorList>
            <person name="Daub H."/>
            <person name="Olsen J.V."/>
            <person name="Bairlein M."/>
            <person name="Gnad F."/>
            <person name="Oppermann F.S."/>
            <person name="Korner R."/>
            <person name="Greff Z."/>
            <person name="Keri G."/>
            <person name="Stemmann O."/>
            <person name="Mann M."/>
        </authorList>
    </citation>
    <scope>PHOSPHORYLATION [LARGE SCALE ANALYSIS] AT SER-528; SER-1283; SER-1541; SER-1878; SER-2120; SER-2222 AND SER-2226</scope>
    <scope>IDENTIFICATION BY MASS SPECTROMETRY [LARGE SCALE ANALYSIS]</scope>
    <source>
        <tissue>Cervix carcinoma</tissue>
    </source>
</reference>
<reference key="13">
    <citation type="journal article" date="2008" name="Proc. Natl. Acad. Sci. U.S.A.">
        <title>A quantitative atlas of mitotic phosphorylation.</title>
        <authorList>
            <person name="Dephoure N."/>
            <person name="Zhou C."/>
            <person name="Villen J."/>
            <person name="Beausoleil S.A."/>
            <person name="Bakalarski C.E."/>
            <person name="Elledge S.J."/>
            <person name="Gygi S.P."/>
        </authorList>
    </citation>
    <scope>PHOSPHORYLATION [LARGE SCALE ANALYSIS] AT SER-1142; SER-1150; SER-1155; SER-1160; THR-1175; SER-1250; SER-1541; SER-1729; SER-1806; THR-1808; SER-1878; SER-1884; SER-1898; SER-2060; SER-2089; SER-2120; SER-2123; SER-2154 AND SER-2212</scope>
    <scope>IDENTIFICATION BY MASS SPECTROMETRY [LARGE SCALE ANALYSIS]</scope>
    <source>
        <tissue>Cervix carcinoma</tissue>
    </source>
</reference>
<reference key="14">
    <citation type="journal article" date="2009" name="Anal. Chem.">
        <title>Lys-N and trypsin cover complementary parts of the phosphoproteome in a refined SCX-based approach.</title>
        <authorList>
            <person name="Gauci S."/>
            <person name="Helbig A.O."/>
            <person name="Slijper M."/>
            <person name="Krijgsveld J."/>
            <person name="Heck A.J."/>
            <person name="Mohammed S."/>
        </authorList>
    </citation>
    <scope>IDENTIFICATION BY MASS SPECTROMETRY [LARGE SCALE ANALYSIS]</scope>
</reference>
<reference key="15">
    <citation type="journal article" date="2009" name="Sci. Signal.">
        <title>Quantitative phosphoproteomic analysis of T cell receptor signaling reveals system-wide modulation of protein-protein interactions.</title>
        <authorList>
            <person name="Mayya V."/>
            <person name="Lundgren D.H."/>
            <person name="Hwang S.-I."/>
            <person name="Rezaul K."/>
            <person name="Wu L."/>
            <person name="Eng J.K."/>
            <person name="Rodionov V."/>
            <person name="Han D.K."/>
        </authorList>
    </citation>
    <scope>PHOSPHORYLATION [LARGE SCALE ANALYSIS] AT SER-1283; SER-1541; SER-1884 AND SER-2222</scope>
    <scope>IDENTIFICATION BY MASS SPECTROMETRY [LARGE SCALE ANALYSIS]</scope>
    <source>
        <tissue>Leukemic T-cell</tissue>
    </source>
</reference>
<reference key="16">
    <citation type="journal article" date="2010" name="Sci. Signal.">
        <title>Quantitative phosphoproteomics reveals widespread full phosphorylation site occupancy during mitosis.</title>
        <authorList>
            <person name="Olsen J.V."/>
            <person name="Vermeulen M."/>
            <person name="Santamaria A."/>
            <person name="Kumar C."/>
            <person name="Miller M.L."/>
            <person name="Jensen L.J."/>
            <person name="Gnad F."/>
            <person name="Cox J."/>
            <person name="Jensen T.S."/>
            <person name="Nigg E.A."/>
            <person name="Brunak S."/>
            <person name="Mann M."/>
        </authorList>
    </citation>
    <scope>PHOSPHORYLATION [LARGE SCALE ANALYSIS] AT SER-528; SER-1160; SER-1232; SER-1283; SER-1297; THR-1369; SER-1513; SER-1533; SER-1541; SER-1878; SER-1898; SER-1944; SER-1946; SER-2043; SER-2044; SER-2120; SER-2154; SER-2212; SER-2222 AND SER-2226</scope>
    <scope>IDENTIFICATION BY MASS SPECTROMETRY [LARGE SCALE ANALYSIS]</scope>
    <source>
        <tissue>Cervix carcinoma</tissue>
    </source>
</reference>
<reference key="17">
    <citation type="journal article" date="2011" name="Sci. Signal.">
        <title>System-wide temporal characterization of the proteome and phosphoproteome of human embryonic stem cell differentiation.</title>
        <authorList>
            <person name="Rigbolt K.T."/>
            <person name="Prokhorova T.A."/>
            <person name="Akimov V."/>
            <person name="Henningsen J."/>
            <person name="Johansen P.T."/>
            <person name="Kratchmarova I."/>
            <person name="Kassem M."/>
            <person name="Mann M."/>
            <person name="Olsen J.V."/>
            <person name="Blagoev B."/>
        </authorList>
    </citation>
    <scope>PHOSPHORYLATION [LARGE SCALE ANALYSIS] AT SER-1142; SER-1160; SER-1214; SER-1283; THR-1517; SER-1533; SER-1541 AND SER-1944</scope>
    <scope>IDENTIFICATION BY MASS SPECTROMETRY [LARGE SCALE ANALYSIS]</scope>
</reference>
<reference key="18">
    <citation type="journal article" date="2013" name="J. Proteome Res.">
        <title>Toward a comprehensive characterization of a human cancer cell phosphoproteome.</title>
        <authorList>
            <person name="Zhou H."/>
            <person name="Di Palma S."/>
            <person name="Preisinger C."/>
            <person name="Peng M."/>
            <person name="Polat A.N."/>
            <person name="Heck A.J."/>
            <person name="Mohammed S."/>
        </authorList>
    </citation>
    <scope>PHOSPHORYLATION [LARGE SCALE ANALYSIS] AT SER-509; SER-528; SER-1153; SER-1160; SER-1214; SER-1218; SER-1222; SER-1232; SER-1250; THR-1257; SER-1283; THR-1369; SER-1513; SER-1541; SER-1944; SER-2089; SER-2212; SER-2222 AND SER-2226</scope>
    <scope>IDENTIFICATION BY MASS SPECTROMETRY [LARGE SCALE ANALYSIS]</scope>
    <source>
        <tissue>Cervix carcinoma</tissue>
        <tissue>Erythroleukemia</tissue>
    </source>
</reference>
<reference key="19">
    <citation type="journal article" date="2014" name="J. Proteomics">
        <title>An enzyme assisted RP-RPLC approach for in-depth analysis of human liver phosphoproteome.</title>
        <authorList>
            <person name="Bian Y."/>
            <person name="Song C."/>
            <person name="Cheng K."/>
            <person name="Dong M."/>
            <person name="Wang F."/>
            <person name="Huang J."/>
            <person name="Sun D."/>
            <person name="Wang L."/>
            <person name="Ye M."/>
            <person name="Zou H."/>
        </authorList>
    </citation>
    <scope>IDENTIFICATION BY MASS SPECTROMETRY [LARGE SCALE ANALYSIS]</scope>
    <source>
        <tissue>Liver</tissue>
    </source>
</reference>
<reference key="20">
    <citation type="journal article" date="2016" name="PLoS Genet.">
        <title>Identification of conserved MEL-28/ELYS domains with essential roles in nuclear assembly and chromosome segregation.</title>
        <authorList>
            <person name="Gomez-Saldivar G."/>
            <person name="Fernandez A."/>
            <person name="Hirano Y."/>
            <person name="Mauro M."/>
            <person name="Lai A."/>
            <person name="Ayuso C."/>
            <person name="Haraguchi T."/>
            <person name="Hiraoka Y."/>
            <person name="Piano F."/>
            <person name="Askjaer P."/>
        </authorList>
    </citation>
    <scope>SUBCELLULAR LOCATION</scope>
</reference>
<keyword id="KW-0002">3D-structure</keyword>
<keyword id="KW-0025">Alternative splicing</keyword>
<keyword id="KW-0131">Cell cycle</keyword>
<keyword id="KW-0132">Cell division</keyword>
<keyword id="KW-0137">Centromere</keyword>
<keyword id="KW-0158">Chromosome</keyword>
<keyword id="KW-0963">Cytoplasm</keyword>
<keyword id="KW-0238">DNA-binding</keyword>
<keyword id="KW-0995">Kinetochore</keyword>
<keyword id="KW-0509">mRNA transport</keyword>
<keyword id="KW-0906">Nuclear pore complex</keyword>
<keyword id="KW-0539">Nucleus</keyword>
<keyword id="KW-0597">Phosphoprotein</keyword>
<keyword id="KW-0653">Protein transport</keyword>
<keyword id="KW-1267">Proteomics identification</keyword>
<keyword id="KW-1185">Reference proteome</keyword>
<keyword id="KW-0811">Translocation</keyword>
<keyword id="KW-0813">Transport</keyword>
<proteinExistence type="evidence at protein level"/>
<organism>
    <name type="scientific">Homo sapiens</name>
    <name type="common">Human</name>
    <dbReference type="NCBI Taxonomy" id="9606"/>
    <lineage>
        <taxon>Eukaryota</taxon>
        <taxon>Metazoa</taxon>
        <taxon>Chordata</taxon>
        <taxon>Craniata</taxon>
        <taxon>Vertebrata</taxon>
        <taxon>Euteleostomi</taxon>
        <taxon>Mammalia</taxon>
        <taxon>Eutheria</taxon>
        <taxon>Euarchontoglires</taxon>
        <taxon>Primates</taxon>
        <taxon>Haplorrhini</taxon>
        <taxon>Catarrhini</taxon>
        <taxon>Hominidae</taxon>
        <taxon>Homo</taxon>
    </lineage>
</organism>
<evidence type="ECO:0000250" key="1"/>
<evidence type="ECO:0000250" key="2">
    <source>
        <dbReference type="UniProtKB" id="Q5U249"/>
    </source>
</evidence>
<evidence type="ECO:0000250" key="3">
    <source>
        <dbReference type="UniProtKB" id="Q8CJF7"/>
    </source>
</evidence>
<evidence type="ECO:0000256" key="4">
    <source>
        <dbReference type="SAM" id="MobiDB-lite"/>
    </source>
</evidence>
<evidence type="ECO:0000269" key="5">
    <source>
    </source>
</evidence>
<evidence type="ECO:0000269" key="6">
    <source>
    </source>
</evidence>
<evidence type="ECO:0000269" key="7">
    <source>
    </source>
</evidence>
<evidence type="ECO:0000303" key="8">
    <source>
    </source>
</evidence>
<evidence type="ECO:0000303" key="9">
    <source ref="2"/>
</evidence>
<evidence type="ECO:0000305" key="10"/>
<evidence type="ECO:0007744" key="11">
    <source>
    </source>
</evidence>
<evidence type="ECO:0007744" key="12">
    <source>
    </source>
</evidence>
<evidence type="ECO:0007744" key="13">
    <source>
    </source>
</evidence>
<evidence type="ECO:0007744" key="14">
    <source>
    </source>
</evidence>
<evidence type="ECO:0007744" key="15">
    <source>
    </source>
</evidence>
<evidence type="ECO:0007744" key="16">
    <source>
    </source>
</evidence>
<evidence type="ECO:0007744" key="17">
    <source>
    </source>
</evidence>
<evidence type="ECO:0007744" key="18">
    <source>
    </source>
</evidence>
<evidence type="ECO:0007744" key="19">
    <source>
    </source>
</evidence>
<comment type="function">
    <text evidence="5 6">Required for the assembly of a functional nuclear pore complex (NPC) on the surface of chromosomes as nuclei form at the end of mitosis. May initiate NPC assembly by binding to chromatin and recruiting the Nup107-160 subcomplex of the NPC. Also required for the localization of the Nup107-160 subcomplex of the NPC to the kinetochore during mitosis and for the completion of cytokinesis.</text>
</comment>
<comment type="subunit">
    <text>Associates with the Nup107-160 subcomplex of the NPC.</text>
</comment>
<comment type="subcellular location">
    <subcellularLocation>
        <location evidence="3">Cytoplasm</location>
    </subcellularLocation>
    <subcellularLocation>
        <location evidence="5 7">Nucleus</location>
    </subcellularLocation>
    <subcellularLocation>
        <location evidence="5 7">Nucleus envelope</location>
    </subcellularLocation>
    <subcellularLocation>
        <location evidence="5">Nucleus matrix</location>
    </subcellularLocation>
    <subcellularLocation>
        <location evidence="5 7">Chromosome</location>
        <location evidence="5 7">Centromere</location>
        <location evidence="5 7">Kinetochore</location>
    </subcellularLocation>
    <subcellularLocation>
        <location evidence="5">Nucleus</location>
        <location evidence="5">Nucleoplasm</location>
    </subcellularLocation>
    <subcellularLocation>
        <location evidence="5">Nucleus</location>
        <location evidence="5">Nuclear pore complex</location>
    </subcellularLocation>
    <text evidence="5">Localizes to the nuclear pore complex (NPC) throughout interphase. Localizes to the kinetochore from prophase, and this appears to require the Nup107-160 subcomplex of the NPC. Localizes to the periphery of chromatin from late anaphase.</text>
</comment>
<comment type="alternative products">
    <event type="alternative splicing"/>
    <isoform>
        <id>Q8WYP5-1</id>
        <name>1</name>
        <sequence type="displayed"/>
    </isoform>
    <isoform>
        <id>Q8WYP5-2</id>
        <name>2</name>
        <sequence type="described" ref="VSP_019844"/>
    </isoform>
    <isoform>
        <id>Q8WYP5-3</id>
        <name>3</name>
        <sequence type="described" ref="VSP_042691"/>
    </isoform>
</comment>
<comment type="domain">
    <text evidence="1">The N-terminus forms a highly conserved seven-bladed beta propeller decorated with long loops and mediates anchorage to the Nup107-160 subcomplex of the nuclear pore, synergistically with the central alpha domain. The disordered C-terminus is responsible for the interactions with chromatin (By similarity).</text>
</comment>
<comment type="similarity">
    <text evidence="10">Belongs to the ELYS family.</text>
</comment>
<comment type="sequence caution" evidence="10">
    <conflict type="frameshift">
        <sequence resource="EMBL-CDS" id="AAN65622"/>
    </conflict>
</comment>
<comment type="sequence caution" evidence="10">
    <conflict type="erroneous initiation">
        <sequence resource="EMBL-CDS" id="AAQ13621"/>
    </conflict>
    <text>Truncated N-terminus.</text>
</comment>
<comment type="sequence caution" evidence="10">
    <conflict type="erroneous initiation">
        <sequence resource="EMBL-CDS" id="BAB78516"/>
    </conflict>
    <text>Truncated N-terminus.</text>
</comment>
<sequence>MRDLRAQVTSGLLPFPEVTLQALGEDEITLESVLRGKFAAGKNGLACLACGPQLEVVNSITGERLSAYRFSGVNEQPPVVLAVKEFSWQKRTGLLIGLEETEGSVLCLYDLGISKVVKAVVLPGRVTAIEPIINHGGASASTQHLHPSLRWLFGVAAVVTDVGQILLVDLCLDDLSCNQNEVEASDLEVLTGIPAEVPHIRESVMRQGRHLCFQLVSPTGTAVSTLSYISRTNQLAVGFSDGYLALWNMKSMKREYYIQLESGQVPVYAVTFQEPENDPRNCCYLWAVQSTQDSEGDVLSLHLLQLAFGNRKCLASGQILYEGLEYCEERYTLDLTGGMFPLRGQTSNTKLLGCQSIEKFRSHGDREEGVNEALSPDTSVSVFTWQVNIYGQGKPSVYLGLFDINRWYHAQMPDSLRSGEYLHNCSYFALWSLESVVSRTSPHGILDILVHERSLNRGVPPSYPPPEQFFNPSTYNFDATCLLNSGVVHLTCTGFQKETLTFLKKSGPSLNELIPDGYNRCLVAGLLSPRFVDVQPSSLSQEEQLEAILSAAIQTSSLGLLTGYIRRWITEEQPNSATNLRFVLEWTWNKVVLTKEEFDRLCVPLFDGSCHFMDPQTIQSIQQCYLLLSNLNIVLSCFASEAREITERGLIDLSNKFVVSHLICQYAQVVLWFSHSGLLPEGIDDSVQLSRLCYNYPVIQNYYTSRRQKFERLSRGKWNPDCLMIDGLVSQLGERIEKLWKRDEGGTGKYPPASLHAVLDMYLLDGVTEAAKHSITIYLLLDIMYSFPNKTDTPIESFPTVFAISWGQVKLIQGFWLIDHNDYESGLDLLFHPATAKPLSWQHSKIIQAFMSQGEHRQALRYIQTMKPTVSSGNDVILHLTVLLFNRCMVEAWNFLRQHCNRLNIEELLKHMYEVCQEMGLMEDLLKLPFTDTEQECLVKFLQSSASVQNHEFLLVHHLQRANYVPALKLNQTLKINVMNDRDPRLRERSLARNSILDQYGKILPRVHRKLAIERAKPYHLSTSSVFRLVSRPKPLSAVPKQVVTGTVLTRSVFINNVLSKIGEVWASKEPINSTTPFNSSKIEEPSPIVYSLPAPELPEAFFGTPISKASQKISRLLDLVVQPVPRPSQCSEFIQQSSMKSPLYLVSRSLPSSSQLKGSPQAISRASELHLLETPLVVKKAKSLAMSVTTSGFSEFTPQSILRSTLRSTPLASPSPSPGRSPQRLKETRISFVEEDVHPKWIPGAADDSKLEVFTTPKKCAVPVETEWLKSKDRTTSFFLNSPEKEHQEMDEGSQSLEKLDVSKGNSSVSITSDETTLEYQDAPSPEDLEETVFTASKPKSSSTALTTNVTEQTEKDGDKDVFASEVTPSDLQKQMGNLEDAETKDLLVAAEAFSELNHLSPVQGTEASLCAPSVYEGKIFTQKSKVPVLDEGLTSVETYTPAIRANDNKSMADVLGDGGNSSLTISEGPIVSERRLNQEVALNLKEDHEVEVGVLKESVDLPEEKLPISDSPPDTQEIHVIEQEKLEAQDSGEEARNLSFNELYPSGTLKLQYNFDTIDQQFCDLADNKDTAECDIAEVDGELFVAQSNFTLILEGEEGEVEPGDFASSDVLPKAANTATEEKLVCSGENDNHGQIANLPSAVTSDQKSQKVDTLPYVPEPIKVAIAENLLDVIKDTRSKEITSDTMEQSIHETIPLVSQNIMCPTKLVKSAFKTAQETSTMTMNVSQVDDVVSSKTRTRGQRIQNVNVKSAQQEASADVATPKMPGQSVRKKTRKAKEISEASENIYSDVRGLSQNQQIPQNSVTPRRGRRKKEVNQDILENTSSVEQELQITTGRESKRLKSSQLLEPAVEETTKKEVKVSSVTKRTPRRIKRSVENQESVEIINDLKVSTVTSPSRMIRKLRSTNLDASENTGNKQDDKSSDKQLRIKHVRRVRGREVSPSDVREDSNLESSQLTVQAEFDMSAIPRKRGRPRKINPSEDVGSKAVKEERSPKKKEAPSIRRRSTRNTPAKSENVDVGKPALGKSILVPNEELSMVMSSKKKLTKKTESQSQKRSLHSVSEERTDEMTHKETNEQEERLLATASFTKSSRSSRTRSSKAILLPDLSEPNNEPLFSPASEVPRKAKAKKIEVPAQLKELVSDLSSQFVISPPALRSRQKNTSNKNKLEDELKDDAQSVETLGKPKAKRIRTSKTKQASKNTEKESAWSPPPIEIRLISPLASPADGVKSKPRKTTEVTGTGLGRNRKKLSSYPKQILRRKML</sequence>
<protein>
    <recommendedName>
        <fullName>Protein ELYS</fullName>
    </recommendedName>
    <alternativeName>
        <fullName>Embryonic large molecule derived from yolk sac</fullName>
    </alternativeName>
    <alternativeName>
        <fullName>Protein MEL-28</fullName>
    </alternativeName>
    <alternativeName>
        <fullName>Putative AT-hook-containing transcription factor 1</fullName>
    </alternativeName>
</protein>